<name>ACDH1_MYCUA</name>
<dbReference type="EC" id="1.2.1.10" evidence="1"/>
<dbReference type="EMBL" id="CP000325">
    <property type="protein sequence ID" value="ABL04788.1"/>
    <property type="status" value="ALT_INIT"/>
    <property type="molecule type" value="Genomic_DNA"/>
</dbReference>
<dbReference type="RefSeq" id="WP_071498395.1">
    <property type="nucleotide sequence ID" value="NC_008611.1"/>
</dbReference>
<dbReference type="SMR" id="A0PR19"/>
<dbReference type="KEGG" id="mul:MUL_2436"/>
<dbReference type="eggNOG" id="COG4569">
    <property type="taxonomic scope" value="Bacteria"/>
</dbReference>
<dbReference type="HOGENOM" id="CLU_062208_0_0_11"/>
<dbReference type="Proteomes" id="UP000000765">
    <property type="component" value="Chromosome"/>
</dbReference>
<dbReference type="GO" id="GO:0008774">
    <property type="term" value="F:acetaldehyde dehydrogenase (acetylating) activity"/>
    <property type="evidence" value="ECO:0007669"/>
    <property type="project" value="UniProtKB-UniRule"/>
</dbReference>
<dbReference type="GO" id="GO:0051287">
    <property type="term" value="F:NAD binding"/>
    <property type="evidence" value="ECO:0007669"/>
    <property type="project" value="UniProtKB-UniRule"/>
</dbReference>
<dbReference type="GO" id="GO:0009056">
    <property type="term" value="P:catabolic process"/>
    <property type="evidence" value="ECO:0007669"/>
    <property type="project" value="UniProtKB-KW"/>
</dbReference>
<dbReference type="CDD" id="cd23933">
    <property type="entry name" value="ALDH_C"/>
    <property type="match status" value="1"/>
</dbReference>
<dbReference type="Gene3D" id="3.30.360.10">
    <property type="entry name" value="Dihydrodipicolinate Reductase, domain 2"/>
    <property type="match status" value="1"/>
</dbReference>
<dbReference type="Gene3D" id="3.40.50.720">
    <property type="entry name" value="NAD(P)-binding Rossmann-like Domain"/>
    <property type="match status" value="1"/>
</dbReference>
<dbReference type="HAMAP" id="MF_01657">
    <property type="entry name" value="Ac_ald_DH_ac"/>
    <property type="match status" value="1"/>
</dbReference>
<dbReference type="InterPro" id="IPR003361">
    <property type="entry name" value="Acetaldehyde_dehydrogenase"/>
</dbReference>
<dbReference type="InterPro" id="IPR015426">
    <property type="entry name" value="Acetylaldehyde_DH_C"/>
</dbReference>
<dbReference type="InterPro" id="IPR036291">
    <property type="entry name" value="NAD(P)-bd_dom_sf"/>
</dbReference>
<dbReference type="InterPro" id="IPR000534">
    <property type="entry name" value="Semialdehyde_DH_NAD-bd"/>
</dbReference>
<dbReference type="NCBIfam" id="TIGR03215">
    <property type="entry name" value="ac_ald_DH_ac"/>
    <property type="match status" value="1"/>
</dbReference>
<dbReference type="NCBIfam" id="NF006157">
    <property type="entry name" value="PRK08300.1"/>
    <property type="match status" value="1"/>
</dbReference>
<dbReference type="Pfam" id="PF09290">
    <property type="entry name" value="AcetDehyd-dimer"/>
    <property type="match status" value="1"/>
</dbReference>
<dbReference type="SMART" id="SM00859">
    <property type="entry name" value="Semialdhyde_dh"/>
    <property type="match status" value="1"/>
</dbReference>
<dbReference type="SUPFAM" id="SSF55347">
    <property type="entry name" value="Glyceraldehyde-3-phosphate dehydrogenase-like, C-terminal domain"/>
    <property type="match status" value="1"/>
</dbReference>
<dbReference type="SUPFAM" id="SSF51735">
    <property type="entry name" value="NAD(P)-binding Rossmann-fold domains"/>
    <property type="match status" value="1"/>
</dbReference>
<reference key="1">
    <citation type="journal article" date="2007" name="Genome Res.">
        <title>Reductive evolution and niche adaptation inferred from the genome of Mycobacterium ulcerans, the causative agent of Buruli ulcer.</title>
        <authorList>
            <person name="Stinear T.P."/>
            <person name="Seemann T."/>
            <person name="Pidot S."/>
            <person name="Frigui W."/>
            <person name="Reysset G."/>
            <person name="Garnier T."/>
            <person name="Meurice G."/>
            <person name="Simon D."/>
            <person name="Bouchier C."/>
            <person name="Ma L."/>
            <person name="Tichit M."/>
            <person name="Porter J.L."/>
            <person name="Ryan J."/>
            <person name="Johnson P.D.R."/>
            <person name="Davies J.K."/>
            <person name="Jenkin G.A."/>
            <person name="Small P.L.C."/>
            <person name="Jones L.M."/>
            <person name="Tekaia F."/>
            <person name="Laval F."/>
            <person name="Daffe M."/>
            <person name="Parkhill J."/>
            <person name="Cole S.T."/>
        </authorList>
    </citation>
    <scope>NUCLEOTIDE SEQUENCE [LARGE SCALE GENOMIC DNA]</scope>
    <source>
        <strain>Agy99</strain>
    </source>
</reference>
<comment type="catalytic activity">
    <reaction evidence="1">
        <text>acetaldehyde + NAD(+) + CoA = acetyl-CoA + NADH + H(+)</text>
        <dbReference type="Rhea" id="RHEA:23288"/>
        <dbReference type="ChEBI" id="CHEBI:15343"/>
        <dbReference type="ChEBI" id="CHEBI:15378"/>
        <dbReference type="ChEBI" id="CHEBI:57287"/>
        <dbReference type="ChEBI" id="CHEBI:57288"/>
        <dbReference type="ChEBI" id="CHEBI:57540"/>
        <dbReference type="ChEBI" id="CHEBI:57945"/>
        <dbReference type="EC" id="1.2.1.10"/>
    </reaction>
</comment>
<comment type="similarity">
    <text evidence="1">Belongs to the acetaldehyde dehydrogenase family.</text>
</comment>
<comment type="sequence caution" evidence="2">
    <conflict type="erroneous initiation">
        <sequence resource="EMBL-CDS" id="ABL04788"/>
    </conflict>
</comment>
<keyword id="KW-0058">Aromatic hydrocarbons catabolism</keyword>
<keyword id="KW-0520">NAD</keyword>
<keyword id="KW-0560">Oxidoreductase</keyword>
<protein>
    <recommendedName>
        <fullName evidence="1">Acetaldehyde dehydrogenase 1</fullName>
        <ecNumber evidence="1">1.2.1.10</ecNumber>
    </recommendedName>
    <alternativeName>
        <fullName evidence="1">Acetaldehyde dehydrogenase [acetylating] 1</fullName>
    </alternativeName>
</protein>
<evidence type="ECO:0000255" key="1">
    <source>
        <dbReference type="HAMAP-Rule" id="MF_01657"/>
    </source>
</evidence>
<evidence type="ECO:0000305" key="2"/>
<feature type="chain" id="PRO_0000387690" description="Acetaldehyde dehydrogenase 1">
    <location>
        <begin position="1"/>
        <end position="336"/>
    </location>
</feature>
<feature type="active site" description="Acyl-thioester intermediate" evidence="1">
    <location>
        <position position="150"/>
    </location>
</feature>
<feature type="binding site" evidence="1">
    <location>
        <begin position="32"/>
        <end position="35"/>
    </location>
    <ligand>
        <name>NAD(+)</name>
        <dbReference type="ChEBI" id="CHEBI:57540"/>
    </ligand>
</feature>
<feature type="binding site" evidence="1">
    <location>
        <position position="309"/>
    </location>
    <ligand>
        <name>NAD(+)</name>
        <dbReference type="ChEBI" id="CHEBI:57540"/>
    </ligand>
</feature>
<proteinExistence type="inferred from homology"/>
<accession>A0PR19</accession>
<organism>
    <name type="scientific">Mycobacterium ulcerans (strain Agy99)</name>
    <dbReference type="NCBI Taxonomy" id="362242"/>
    <lineage>
        <taxon>Bacteria</taxon>
        <taxon>Bacillati</taxon>
        <taxon>Actinomycetota</taxon>
        <taxon>Actinomycetes</taxon>
        <taxon>Mycobacteriales</taxon>
        <taxon>Mycobacteriaceae</taxon>
        <taxon>Mycobacterium</taxon>
        <taxon>Mycobacterium ulcerans group</taxon>
    </lineage>
</organism>
<sequence>MSLGAADVGAGAGPPGQHAGAVDNWPVAIIGSGVVGTDLMSRIGNGDGRLRVSAMVGTNPHCDGLARAAAAGISTSPGGVDGLLSMPEFANIRLVFDTTNPGAHQSNWARLADTGVRMLDLTASAIGPCCVPAVNLDAQLDAPNLSMATCSAQAAVPIVAAVRRHGVVRYAEVVSAIASQALGPAERVTLDEFAELTTTAVQELGGARRAKTLTIVNPADPPMPMRTTVFCLVDQADEVARNEADVLAVVDGVQALLPGYRLKHRVQFERLGSGNTLYIPGTGEFGGTRITVLLEITAAGGYLPACAGNVAIVTSAAKATAEAIVERHAQTLKAKI</sequence>
<gene>
    <name type="primary">mhpF</name>
    <name type="ordered locus">MUL_2436</name>
</gene>